<organism>
    <name type="scientific">Salmonella typhimurium (strain LT2 / SGSC1412 / ATCC 700720)</name>
    <dbReference type="NCBI Taxonomy" id="99287"/>
    <lineage>
        <taxon>Bacteria</taxon>
        <taxon>Pseudomonadati</taxon>
        <taxon>Pseudomonadota</taxon>
        <taxon>Gammaproteobacteria</taxon>
        <taxon>Enterobacterales</taxon>
        <taxon>Enterobacteriaceae</taxon>
        <taxon>Salmonella</taxon>
    </lineage>
</organism>
<feature type="chain" id="PRO_0000072713" description="Oxygen-insensitive NAD(P)H nitroreductase">
    <location>
        <begin position="1"/>
        <end position="217"/>
    </location>
</feature>
<feature type="binding site" evidence="1">
    <location>
        <begin position="10"/>
        <end position="14"/>
    </location>
    <ligand>
        <name>FMN</name>
        <dbReference type="ChEBI" id="CHEBI:58210"/>
    </ligand>
</feature>
<feature type="binding site" evidence="3">
    <location>
        <position position="14"/>
    </location>
    <ligand>
        <name>NAD(+)</name>
        <dbReference type="ChEBI" id="CHEBI:57540"/>
    </ligand>
</feature>
<feature type="binding site" evidence="3">
    <location>
        <position position="41"/>
    </location>
    <ligand>
        <name>NAD(+)</name>
        <dbReference type="ChEBI" id="CHEBI:57540"/>
    </ligand>
</feature>
<feature type="binding site" evidence="1">
    <location>
        <position position="71"/>
    </location>
    <ligand>
        <name>FMN</name>
        <dbReference type="ChEBI" id="CHEBI:58210"/>
    </ligand>
</feature>
<feature type="binding site" evidence="3">
    <location>
        <position position="71"/>
    </location>
    <ligand>
        <name>NAD(+)</name>
        <dbReference type="ChEBI" id="CHEBI:57540"/>
    </ligand>
</feature>
<feature type="binding site" evidence="3">
    <location>
        <position position="74"/>
    </location>
    <ligand>
        <name>NAD(+)</name>
        <dbReference type="ChEBI" id="CHEBI:57540"/>
    </ligand>
</feature>
<feature type="binding site" evidence="3">
    <location>
        <position position="107"/>
    </location>
    <ligand>
        <name>NAD(+)</name>
        <dbReference type="ChEBI" id="CHEBI:57540"/>
    </ligand>
</feature>
<feature type="binding site" evidence="1">
    <location>
        <begin position="165"/>
        <end position="166"/>
    </location>
    <ligand>
        <name>FMN</name>
        <dbReference type="ChEBI" id="CHEBI:58210"/>
    </ligand>
</feature>
<feature type="binding site" evidence="1">
    <location>
        <begin position="205"/>
        <end position="207"/>
    </location>
    <ligand>
        <name>FMN</name>
        <dbReference type="ChEBI" id="CHEBI:58210"/>
    </ligand>
</feature>
<feature type="helix" evidence="6">
    <location>
        <begin position="3"/>
        <end position="9"/>
    </location>
</feature>
<feature type="helix" evidence="6">
    <location>
        <begin position="24"/>
        <end position="36"/>
    </location>
</feature>
<feature type="helix" evidence="6">
    <location>
        <begin position="40"/>
        <end position="42"/>
    </location>
</feature>
<feature type="strand" evidence="6">
    <location>
        <begin position="46"/>
        <end position="51"/>
    </location>
</feature>
<feature type="helix" evidence="6">
    <location>
        <begin position="54"/>
        <end position="61"/>
    </location>
</feature>
<feature type="helix" evidence="6">
    <location>
        <begin position="62"/>
        <end position="64"/>
    </location>
</feature>
<feature type="helix" evidence="6">
    <location>
        <begin position="66"/>
        <end position="71"/>
    </location>
</feature>
<feature type="helix" evidence="6">
    <location>
        <begin position="72"/>
        <end position="77"/>
    </location>
</feature>
<feature type="strand" evidence="6">
    <location>
        <begin position="78"/>
        <end position="89"/>
    </location>
</feature>
<feature type="helix" evidence="6">
    <location>
        <begin position="92"/>
        <end position="104"/>
    </location>
</feature>
<feature type="helix" evidence="6">
    <location>
        <begin position="111"/>
        <end position="129"/>
    </location>
</feature>
<feature type="turn" evidence="6">
    <location>
        <begin position="130"/>
        <end position="132"/>
    </location>
</feature>
<feature type="helix" evidence="6">
    <location>
        <begin position="135"/>
        <end position="156"/>
    </location>
</feature>
<feature type="helix" evidence="6">
    <location>
        <begin position="169"/>
        <end position="175"/>
    </location>
</feature>
<feature type="helix" evidence="6">
    <location>
        <begin position="178"/>
        <end position="181"/>
    </location>
</feature>
<feature type="strand" evidence="6">
    <location>
        <begin position="183"/>
        <end position="192"/>
    </location>
</feature>
<feature type="helix" evidence="6">
    <location>
        <begin position="199"/>
        <end position="202"/>
    </location>
</feature>
<feature type="helix" evidence="6">
    <location>
        <begin position="210"/>
        <end position="213"/>
    </location>
</feature>
<feature type="strand" evidence="6">
    <location>
        <begin position="214"/>
        <end position="217"/>
    </location>
</feature>
<accession>P15888</accession>
<protein>
    <recommendedName>
        <fullName>Oxygen-insensitive NAD(P)H nitroreductase</fullName>
        <ecNumber>1.-.-.-</ecNumber>
    </recommendedName>
</protein>
<keyword id="KW-0002">3D-structure</keyword>
<keyword id="KW-0285">Flavoprotein</keyword>
<keyword id="KW-0288">FMN</keyword>
<keyword id="KW-0520">NAD</keyword>
<keyword id="KW-0521">NADP</keyword>
<keyword id="KW-0560">Oxidoreductase</keyword>
<keyword id="KW-1185">Reference proteome</keyword>
<gene>
    <name evidence="2" type="primary">nfsB</name>
    <name evidence="5" type="synonym">nfnB</name>
    <name type="synonym">nfsI</name>
    <name type="ordered locus">STM0578</name>
</gene>
<reference key="1">
    <citation type="journal article" date="1990" name="Nucleic Acids Res.">
        <title>Nucleotide sequence of Salmonella typhimurium nitroreductase gene.</title>
        <authorList>
            <person name="Watanabe M."/>
            <person name="Ishidate M."/>
            <person name="Nohmi T."/>
        </authorList>
    </citation>
    <scope>NUCLEOTIDE SEQUENCE [GENOMIC DNA]</scope>
    <source>
        <strain>ATCC 29631 / TA 1538</strain>
    </source>
</reference>
<reference key="2">
    <citation type="journal article" date="2001" name="Nature">
        <title>Complete genome sequence of Salmonella enterica serovar Typhimurium LT2.</title>
        <authorList>
            <person name="McClelland M."/>
            <person name="Sanderson K.E."/>
            <person name="Spieth J."/>
            <person name="Clifton S.W."/>
            <person name="Latreille P."/>
            <person name="Courtney L."/>
            <person name="Porwollik S."/>
            <person name="Ali J."/>
            <person name="Dante M."/>
            <person name="Du F."/>
            <person name="Hou S."/>
            <person name="Layman D."/>
            <person name="Leonard S."/>
            <person name="Nguyen C."/>
            <person name="Scott K."/>
            <person name="Holmes A."/>
            <person name="Grewal N."/>
            <person name="Mulvaney E."/>
            <person name="Ryan E."/>
            <person name="Sun H."/>
            <person name="Florea L."/>
            <person name="Miller W."/>
            <person name="Stoneking T."/>
            <person name="Nhan M."/>
            <person name="Waterston R."/>
            <person name="Wilson R.K."/>
        </authorList>
    </citation>
    <scope>NUCLEOTIDE SEQUENCE [LARGE SCALE GENOMIC DNA]</scope>
    <source>
        <strain>LT2 / SGSC1412 / ATCC 700720</strain>
    </source>
</reference>
<evidence type="ECO:0000250" key="1"/>
<evidence type="ECO:0000250" key="2">
    <source>
        <dbReference type="UniProtKB" id="P38489"/>
    </source>
</evidence>
<evidence type="ECO:0000250" key="3">
    <source>
        <dbReference type="UniProtKB" id="Q01234"/>
    </source>
</evidence>
<evidence type="ECO:0000305" key="4"/>
<evidence type="ECO:0000312" key="5">
    <source>
        <dbReference type="EMBL" id="AAL19529.1"/>
    </source>
</evidence>
<evidence type="ECO:0007829" key="6">
    <source>
        <dbReference type="PDB" id="3HZN"/>
    </source>
</evidence>
<dbReference type="EC" id="1.-.-.-"/>
<dbReference type="EMBL" id="X17250">
    <property type="protein sequence ID" value="CAA35113.1"/>
    <property type="molecule type" value="Genomic_DNA"/>
</dbReference>
<dbReference type="EMBL" id="AE006468">
    <property type="protein sequence ID" value="AAL19529.1"/>
    <property type="molecule type" value="Genomic_DNA"/>
</dbReference>
<dbReference type="PIR" id="S08397">
    <property type="entry name" value="S08397"/>
</dbReference>
<dbReference type="RefSeq" id="NP_459570.1">
    <property type="nucleotide sequence ID" value="NC_003197.2"/>
</dbReference>
<dbReference type="RefSeq" id="WP_000355879.1">
    <property type="nucleotide sequence ID" value="NC_003197.2"/>
</dbReference>
<dbReference type="PDB" id="3HZN">
    <property type="method" value="X-ray"/>
    <property type="resolution" value="2.40 A"/>
    <property type="chains" value="A/B/C/D/E/F/G/H=1-217"/>
</dbReference>
<dbReference type="PDBsum" id="3HZN"/>
<dbReference type="SMR" id="P15888"/>
<dbReference type="STRING" id="99287.STM0578"/>
<dbReference type="PaxDb" id="99287-STM0578"/>
<dbReference type="GeneID" id="1252098"/>
<dbReference type="KEGG" id="stm:STM0578"/>
<dbReference type="PATRIC" id="fig|99287.12.peg.610"/>
<dbReference type="HOGENOM" id="CLU_070764_4_1_6"/>
<dbReference type="OMA" id="DQWMAKQ"/>
<dbReference type="PhylomeDB" id="P15888"/>
<dbReference type="BioCyc" id="SENT99287:STM0578-MONOMER"/>
<dbReference type="BRENDA" id="1.7.1.16">
    <property type="organism ID" value="5542"/>
</dbReference>
<dbReference type="EvolutionaryTrace" id="P15888"/>
<dbReference type="Proteomes" id="UP000001014">
    <property type="component" value="Chromosome"/>
</dbReference>
<dbReference type="GO" id="GO:0005829">
    <property type="term" value="C:cytosol"/>
    <property type="evidence" value="ECO:0000318"/>
    <property type="project" value="GO_Central"/>
</dbReference>
<dbReference type="GO" id="GO:0016491">
    <property type="term" value="F:oxidoreductase activity"/>
    <property type="evidence" value="ECO:0000318"/>
    <property type="project" value="GO_Central"/>
</dbReference>
<dbReference type="GO" id="GO:0046256">
    <property type="term" value="P:2,4,6-trinitrotoluene catabolic process"/>
    <property type="evidence" value="ECO:0000318"/>
    <property type="project" value="GO_Central"/>
</dbReference>
<dbReference type="CDD" id="cd02149">
    <property type="entry name" value="NfsB-like"/>
    <property type="match status" value="1"/>
</dbReference>
<dbReference type="FunFam" id="3.40.109.10:FF:000002">
    <property type="entry name" value="Oxygen-insensitive NAD(P)H nitroreductase"/>
    <property type="match status" value="1"/>
</dbReference>
<dbReference type="Gene3D" id="3.40.109.10">
    <property type="entry name" value="NADH Oxidase"/>
    <property type="match status" value="1"/>
</dbReference>
<dbReference type="InterPro" id="IPR033878">
    <property type="entry name" value="NfsB-like"/>
</dbReference>
<dbReference type="InterPro" id="IPR029479">
    <property type="entry name" value="Nitroreductase"/>
</dbReference>
<dbReference type="InterPro" id="IPR000415">
    <property type="entry name" value="Nitroreductase-like"/>
</dbReference>
<dbReference type="InterPro" id="IPR050627">
    <property type="entry name" value="Nitroreductase/BluB"/>
</dbReference>
<dbReference type="NCBIfam" id="NF008275">
    <property type="entry name" value="PRK11053.1"/>
    <property type="match status" value="1"/>
</dbReference>
<dbReference type="PANTHER" id="PTHR23026">
    <property type="entry name" value="NADPH NITROREDUCTASE"/>
    <property type="match status" value="1"/>
</dbReference>
<dbReference type="PANTHER" id="PTHR23026:SF125">
    <property type="entry name" value="OXYGEN-INSENSITIVE NAD(P)H NITROREDUCTASE"/>
    <property type="match status" value="1"/>
</dbReference>
<dbReference type="Pfam" id="PF00881">
    <property type="entry name" value="Nitroreductase"/>
    <property type="match status" value="1"/>
</dbReference>
<dbReference type="SUPFAM" id="SSF55469">
    <property type="entry name" value="FMN-dependent nitroreductase-like"/>
    <property type="match status" value="1"/>
</dbReference>
<sequence>MDIVSVALQRYSTKAFDPSKKLTAEEADKIKTLLQYSPSSTNSQPWHFIVASTEEGKARVAKSAAGNYTFNERKMLDASHVVVFCAKTAMDDAWLERVVDQEDADGRFATPEAKAANDKGRRFFADMHRVSLKDDHQWMAKQVYLNVGNFLLGVAAMGLDAVPIEGFDAEVLDAEFGLKEKGYTSLVVVPVGHHSVEDFNAGLPKSRLPLETTLTEV</sequence>
<proteinExistence type="evidence at protein level"/>
<name>NFSB_SALTY</name>
<comment type="function">
    <text evidence="1">Reduction of a variety of nitroaromatic compounds using NADH (and to lesser extent NADPH) as source of reducing equivalents; two electrons are transferred. Capable of reducing nitrofurazone (By similarity).</text>
</comment>
<comment type="cofactor">
    <cofactor>
        <name>FMN</name>
        <dbReference type="ChEBI" id="CHEBI:58210"/>
    </cofactor>
</comment>
<comment type="subunit">
    <text evidence="1">Homodimer.</text>
</comment>
<comment type="similarity">
    <text evidence="4">Belongs to the nitroreductase family.</text>
</comment>